<evidence type="ECO:0000255" key="1">
    <source>
        <dbReference type="HAMAP-Rule" id="MF_01420"/>
    </source>
</evidence>
<gene>
    <name evidence="1" type="primary">whiA</name>
    <name type="ordered locus">BLA_1367</name>
</gene>
<accession>B8DUH3</accession>
<protein>
    <recommendedName>
        <fullName evidence="1">Probable cell division protein WhiA</fullName>
    </recommendedName>
</protein>
<reference key="1">
    <citation type="journal article" date="2009" name="J. Bacteriol.">
        <title>Genome sequence of the probiotic bacterium Bifidobacterium animalis subsp. lactis AD011.</title>
        <authorList>
            <person name="Kim J.F."/>
            <person name="Jeong H."/>
            <person name="Yu D.S."/>
            <person name="Choi S.-H."/>
            <person name="Hur C.-G."/>
            <person name="Park M.-S."/>
            <person name="Yoon S.H."/>
            <person name="Kim D.-W."/>
            <person name="Ji G.E."/>
            <person name="Park H.-S."/>
            <person name="Oh T.K."/>
        </authorList>
    </citation>
    <scope>NUCLEOTIDE SEQUENCE [LARGE SCALE GENOMIC DNA]</scope>
    <source>
        <strain>AD011</strain>
    </source>
</reference>
<comment type="function">
    <text evidence="1">Involved in cell division and chromosome segregation.</text>
</comment>
<comment type="similarity">
    <text evidence="1">Belongs to the WhiA family.</text>
</comment>
<name>WHIA_BIFA0</name>
<feature type="chain" id="PRO_0000376447" description="Probable cell division protein WhiA">
    <location>
        <begin position="1"/>
        <end position="320"/>
    </location>
</feature>
<feature type="DNA-binding region" description="H-T-H motif" evidence="1">
    <location>
        <begin position="282"/>
        <end position="315"/>
    </location>
</feature>
<proteinExistence type="inferred from homology"/>
<dbReference type="EMBL" id="CP001213">
    <property type="protein sequence ID" value="ACL29652.1"/>
    <property type="molecule type" value="Genomic_DNA"/>
</dbReference>
<dbReference type="RefSeq" id="WP_004217922.1">
    <property type="nucleotide sequence ID" value="NC_011835.1"/>
</dbReference>
<dbReference type="SMR" id="B8DUH3"/>
<dbReference type="STRING" id="442563.BLA_1367"/>
<dbReference type="GeneID" id="29695549"/>
<dbReference type="KEGG" id="bla:BLA_1367"/>
<dbReference type="HOGENOM" id="CLU_053282_0_0_11"/>
<dbReference type="Proteomes" id="UP000002456">
    <property type="component" value="Chromosome"/>
</dbReference>
<dbReference type="GO" id="GO:0003677">
    <property type="term" value="F:DNA binding"/>
    <property type="evidence" value="ECO:0007669"/>
    <property type="project" value="UniProtKB-UniRule"/>
</dbReference>
<dbReference type="GO" id="GO:0051301">
    <property type="term" value="P:cell division"/>
    <property type="evidence" value="ECO:0007669"/>
    <property type="project" value="UniProtKB-UniRule"/>
</dbReference>
<dbReference type="GO" id="GO:0043937">
    <property type="term" value="P:regulation of sporulation"/>
    <property type="evidence" value="ECO:0007669"/>
    <property type="project" value="InterPro"/>
</dbReference>
<dbReference type="Gene3D" id="3.10.28.10">
    <property type="entry name" value="Homing endonucleases"/>
    <property type="match status" value="1"/>
</dbReference>
<dbReference type="HAMAP" id="MF_01420">
    <property type="entry name" value="HTH_type_WhiA"/>
    <property type="match status" value="1"/>
</dbReference>
<dbReference type="InterPro" id="IPR027434">
    <property type="entry name" value="Homing_endonucl"/>
</dbReference>
<dbReference type="InterPro" id="IPR003802">
    <property type="entry name" value="Sporulation_regulator_WhiA"/>
</dbReference>
<dbReference type="InterPro" id="IPR023054">
    <property type="entry name" value="Sporulation_regulator_WhiA_C"/>
</dbReference>
<dbReference type="InterPro" id="IPR039518">
    <property type="entry name" value="WhiA_LAGLIDADG_dom"/>
</dbReference>
<dbReference type="NCBIfam" id="TIGR00647">
    <property type="entry name" value="DNA_bind_WhiA"/>
    <property type="match status" value="1"/>
</dbReference>
<dbReference type="PANTHER" id="PTHR37307">
    <property type="entry name" value="CELL DIVISION PROTEIN WHIA-RELATED"/>
    <property type="match status" value="1"/>
</dbReference>
<dbReference type="PANTHER" id="PTHR37307:SF1">
    <property type="entry name" value="CELL DIVISION PROTEIN WHIA-RELATED"/>
    <property type="match status" value="1"/>
</dbReference>
<dbReference type="Pfam" id="PF02650">
    <property type="entry name" value="HTH_WhiA"/>
    <property type="match status" value="1"/>
</dbReference>
<dbReference type="Pfam" id="PF14527">
    <property type="entry name" value="LAGLIDADG_WhiA"/>
    <property type="match status" value="1"/>
</dbReference>
<dbReference type="SUPFAM" id="SSF55608">
    <property type="entry name" value="Homing endonucleases"/>
    <property type="match status" value="1"/>
</dbReference>
<sequence length="320" mass="35026">MALLDEVKSELSNIDGGSPAVQKAQVTSMLYFGRGFRKVQRESSTQIIVQPQFDSMEAAHWLQETIESLYKIPAALKSVDVKTPQGSMRRYAVDVGARAGFALAVRTGMIDPRLNRIVRGLPTDLSNGNIAQIKGVWRGAFMSAGVLSDPDKPSALEIICPNEETADSLIAMGQRLGIRAAKHTVRSSVRVHLSDPDAIERLLTMMGASSTVRDWTGKRPDTESHHRANRLANFDDANMRRSAKAAAEAVVKVQHAFDVLGDDIPQNLRAAGQLRIDHPDFSLEELGRAARPQISKDAVAGRIRRLLQRAEKAEQDAAMA</sequence>
<organism>
    <name type="scientific">Bifidobacterium animalis subsp. lactis (strain AD011)</name>
    <dbReference type="NCBI Taxonomy" id="442563"/>
    <lineage>
        <taxon>Bacteria</taxon>
        <taxon>Bacillati</taxon>
        <taxon>Actinomycetota</taxon>
        <taxon>Actinomycetes</taxon>
        <taxon>Bifidobacteriales</taxon>
        <taxon>Bifidobacteriaceae</taxon>
        <taxon>Bifidobacterium</taxon>
    </lineage>
</organism>
<keyword id="KW-0131">Cell cycle</keyword>
<keyword id="KW-0132">Cell division</keyword>
<keyword id="KW-0238">DNA-binding</keyword>
<keyword id="KW-1185">Reference proteome</keyword>